<dbReference type="EC" id="7.1.1.-" evidence="1"/>
<dbReference type="EMBL" id="CP000243">
    <property type="protein sequence ID" value="ABE08033.1"/>
    <property type="molecule type" value="Genomic_DNA"/>
</dbReference>
<dbReference type="RefSeq" id="WP_000247881.1">
    <property type="nucleotide sequence ID" value="NZ_CP064825.1"/>
</dbReference>
<dbReference type="SMR" id="Q1R9D1"/>
<dbReference type="KEGG" id="eci:UTI89_C2566"/>
<dbReference type="HOGENOM" id="CLU_015134_3_2_6"/>
<dbReference type="Proteomes" id="UP000001952">
    <property type="component" value="Chromosome"/>
</dbReference>
<dbReference type="GO" id="GO:0030964">
    <property type="term" value="C:NADH dehydrogenase complex"/>
    <property type="evidence" value="ECO:0007669"/>
    <property type="project" value="InterPro"/>
</dbReference>
<dbReference type="GO" id="GO:0005886">
    <property type="term" value="C:plasma membrane"/>
    <property type="evidence" value="ECO:0007669"/>
    <property type="project" value="UniProtKB-SubCell"/>
</dbReference>
<dbReference type="GO" id="GO:0051287">
    <property type="term" value="F:NAD binding"/>
    <property type="evidence" value="ECO:0007669"/>
    <property type="project" value="InterPro"/>
</dbReference>
<dbReference type="GO" id="GO:0008137">
    <property type="term" value="F:NADH dehydrogenase (ubiquinone) activity"/>
    <property type="evidence" value="ECO:0007669"/>
    <property type="project" value="InterPro"/>
</dbReference>
<dbReference type="GO" id="GO:0050136">
    <property type="term" value="F:NADH:ubiquinone reductase (non-electrogenic) activity"/>
    <property type="evidence" value="ECO:0007669"/>
    <property type="project" value="UniProtKB-UniRule"/>
</dbReference>
<dbReference type="GO" id="GO:0048038">
    <property type="term" value="F:quinone binding"/>
    <property type="evidence" value="ECO:0007669"/>
    <property type="project" value="UniProtKB-KW"/>
</dbReference>
<dbReference type="FunFam" id="1.10.645.10:FF:000001">
    <property type="entry name" value="NADH-quinone oxidoreductase subunit C/D"/>
    <property type="match status" value="1"/>
</dbReference>
<dbReference type="FunFam" id="3.30.460.80:FF:000001">
    <property type="entry name" value="NADH-quinone oxidoreductase subunit C/D"/>
    <property type="match status" value="1"/>
</dbReference>
<dbReference type="Gene3D" id="1.10.645.10">
    <property type="entry name" value="Cytochrome-c3 Hydrogenase, chain B"/>
    <property type="match status" value="1"/>
</dbReference>
<dbReference type="Gene3D" id="3.30.460.80">
    <property type="entry name" value="NADH:ubiquinone oxidoreductase, 30kDa subunit"/>
    <property type="match status" value="1"/>
</dbReference>
<dbReference type="HAMAP" id="MF_01357">
    <property type="entry name" value="NDH1_NuoC"/>
    <property type="match status" value="1"/>
</dbReference>
<dbReference type="HAMAP" id="MF_01359">
    <property type="entry name" value="NDH1_NuoCD_1"/>
    <property type="match status" value="1"/>
</dbReference>
<dbReference type="HAMAP" id="MF_01358">
    <property type="entry name" value="NDH1_NuoD"/>
    <property type="match status" value="1"/>
</dbReference>
<dbReference type="InterPro" id="IPR010218">
    <property type="entry name" value="NADH_DH_suC"/>
</dbReference>
<dbReference type="InterPro" id="IPR023062">
    <property type="entry name" value="NADH_DH_suCD"/>
</dbReference>
<dbReference type="InterPro" id="IPR001135">
    <property type="entry name" value="NADH_Q_OxRdtase_suD"/>
</dbReference>
<dbReference type="InterPro" id="IPR037232">
    <property type="entry name" value="NADH_quin_OxRdtase_su_C/D-like"/>
</dbReference>
<dbReference type="InterPro" id="IPR001268">
    <property type="entry name" value="NADH_UbQ_OxRdtase_30kDa_su"/>
</dbReference>
<dbReference type="InterPro" id="IPR014029">
    <property type="entry name" value="NADH_UbQ_OxRdtase_49kDa_CS"/>
</dbReference>
<dbReference type="InterPro" id="IPR020396">
    <property type="entry name" value="NADH_UbQ_OxRdtase_CS"/>
</dbReference>
<dbReference type="InterPro" id="IPR022885">
    <property type="entry name" value="NDH1_su_D/H"/>
</dbReference>
<dbReference type="InterPro" id="IPR029014">
    <property type="entry name" value="NiFe-Hase_large"/>
</dbReference>
<dbReference type="NCBIfam" id="TIGR01961">
    <property type="entry name" value="NuoC_fam"/>
    <property type="match status" value="1"/>
</dbReference>
<dbReference type="NCBIfam" id="TIGR01962">
    <property type="entry name" value="NuoD"/>
    <property type="match status" value="1"/>
</dbReference>
<dbReference type="NCBIfam" id="NF004739">
    <property type="entry name" value="PRK06075.1"/>
    <property type="match status" value="1"/>
</dbReference>
<dbReference type="NCBIfam" id="NF008728">
    <property type="entry name" value="PRK11742.1"/>
    <property type="match status" value="1"/>
</dbReference>
<dbReference type="PANTHER" id="PTHR11993:SF45">
    <property type="entry name" value="NADH-QUINONE OXIDOREDUCTASE SUBUNIT C_D"/>
    <property type="match status" value="1"/>
</dbReference>
<dbReference type="PANTHER" id="PTHR11993">
    <property type="entry name" value="NADH-UBIQUINONE OXIDOREDUCTASE 49 KDA SUBUNIT"/>
    <property type="match status" value="1"/>
</dbReference>
<dbReference type="Pfam" id="PF00329">
    <property type="entry name" value="Complex1_30kDa"/>
    <property type="match status" value="1"/>
</dbReference>
<dbReference type="Pfam" id="PF00346">
    <property type="entry name" value="Complex1_49kDa"/>
    <property type="match status" value="1"/>
</dbReference>
<dbReference type="SUPFAM" id="SSF56762">
    <property type="entry name" value="HydB/Nqo4-like"/>
    <property type="match status" value="1"/>
</dbReference>
<dbReference type="SUPFAM" id="SSF143243">
    <property type="entry name" value="Nqo5-like"/>
    <property type="match status" value="1"/>
</dbReference>
<dbReference type="PROSITE" id="PS00542">
    <property type="entry name" value="COMPLEX1_30K"/>
    <property type="match status" value="1"/>
</dbReference>
<dbReference type="PROSITE" id="PS00535">
    <property type="entry name" value="COMPLEX1_49K"/>
    <property type="match status" value="1"/>
</dbReference>
<feature type="chain" id="PRO_0000358635" description="NADH-quinone oxidoreductase subunit C/D">
    <location>
        <begin position="1"/>
        <end position="600"/>
    </location>
</feature>
<feature type="region of interest" description="NADH dehydrogenase I subunit C" evidence="1">
    <location>
        <begin position="1"/>
        <end position="190"/>
    </location>
</feature>
<feature type="region of interest" description="NADH dehydrogenase I subunit D" evidence="1">
    <location>
        <begin position="214"/>
        <end position="600"/>
    </location>
</feature>
<name>NUOCD_ECOUT</name>
<sequence length="600" mass="68711">MVNNMTDLTAQEPAWQTRDHLDDPVIGELRNRFGPDAFTVQATRTGVPVVWIKREQLLEVGDFLKKLPKPYVMLFDLHGMDERLRTHREGLPAADFSVFYHLISIDRNRDIMLKVALAENDLHVPTFTKLFPNANWYERETWDLFGITFDGHPNLRRIMMPQTWKGHPLRKDYPARATEFSPFELTKAKQDLEMEALTFKPEEWGMKRGTENEDFMFLNLGPNHPSAHGAFRIVLQLDGEEIVDCVPDIGYHHRGAEKMGERQSWHSYIPYTDRIEYLGGCVNEMPYVLAVEKLAGITVPDRVNVIRVMLSELFRINSHLLYISTFIQDVGAMTPVFFAFTDRQKIYDLVEAITGFRMHPAWFRIGGVAHDLPRGWDRLLREFLDWMPKRLASYEKAALQNTILKGRSQGVAAYGAKEALEWGTTGAGLRATGIDFDVRKARPYSGYENFDFEIPVGGGVSDCYTRVMLKVEELRQSLRILEQCLNNMPEGPFKADHPLTTPPPKERTLQHIETLITHFLQVSWGPVMPANESFQMVEATKGINSYYLTSDGSTMSYRTRIRTPSYAHLQQIPAAIRGSLVSDLIVYLGSIDFVMSDVDR</sequence>
<keyword id="KW-0997">Cell inner membrane</keyword>
<keyword id="KW-1003">Cell membrane</keyword>
<keyword id="KW-0472">Membrane</keyword>
<keyword id="KW-0511">Multifunctional enzyme</keyword>
<keyword id="KW-0520">NAD</keyword>
<keyword id="KW-0874">Quinone</keyword>
<keyword id="KW-1278">Translocase</keyword>
<keyword id="KW-0813">Transport</keyword>
<keyword id="KW-0830">Ubiquinone</keyword>
<accession>Q1R9D1</accession>
<evidence type="ECO:0000255" key="1">
    <source>
        <dbReference type="HAMAP-Rule" id="MF_01359"/>
    </source>
</evidence>
<organism>
    <name type="scientific">Escherichia coli (strain UTI89 / UPEC)</name>
    <dbReference type="NCBI Taxonomy" id="364106"/>
    <lineage>
        <taxon>Bacteria</taxon>
        <taxon>Pseudomonadati</taxon>
        <taxon>Pseudomonadota</taxon>
        <taxon>Gammaproteobacteria</taxon>
        <taxon>Enterobacterales</taxon>
        <taxon>Enterobacteriaceae</taxon>
        <taxon>Escherichia</taxon>
    </lineage>
</organism>
<proteinExistence type="inferred from homology"/>
<comment type="function">
    <text evidence="1">NDH-1 shuttles electrons from NADH, via FMN and iron-sulfur (Fe-S) centers, to quinones in the respiratory chain. The immediate electron acceptor for the enzyme in this species is believed to be ubiquinone. Couples the redox reaction to proton translocation (for every two electrons transferred, four hydrogen ions are translocated across the cytoplasmic membrane), and thus conserves the redox energy in a proton gradient.</text>
</comment>
<comment type="catalytic activity">
    <reaction evidence="1">
        <text>a quinone + NADH + 5 H(+)(in) = a quinol + NAD(+) + 4 H(+)(out)</text>
        <dbReference type="Rhea" id="RHEA:57888"/>
        <dbReference type="ChEBI" id="CHEBI:15378"/>
        <dbReference type="ChEBI" id="CHEBI:24646"/>
        <dbReference type="ChEBI" id="CHEBI:57540"/>
        <dbReference type="ChEBI" id="CHEBI:57945"/>
        <dbReference type="ChEBI" id="CHEBI:132124"/>
    </reaction>
</comment>
<comment type="subunit">
    <text evidence="1">NDH-1 is composed of 13 different subunits. Subunits NuoB, CD, E, F, and G constitute the peripheral sector of the complex.</text>
</comment>
<comment type="subcellular location">
    <subcellularLocation>
        <location evidence="1">Cell inner membrane</location>
        <topology evidence="1">Peripheral membrane protein</topology>
        <orientation evidence="1">Cytoplasmic side</orientation>
    </subcellularLocation>
</comment>
<comment type="similarity">
    <text evidence="1">In the N-terminal section; belongs to the complex I 30 kDa subunit family.</text>
</comment>
<comment type="similarity">
    <text evidence="1">In the C-terminal section; belongs to the complex I 49 kDa subunit family.</text>
</comment>
<gene>
    <name evidence="1" type="primary">nuoC</name>
    <name evidence="1" type="synonym">nuoCD</name>
    <name evidence="1" type="synonym">nuoD</name>
    <name type="ordered locus">UTI89_C2566</name>
</gene>
<protein>
    <recommendedName>
        <fullName evidence="1">NADH-quinone oxidoreductase subunit C/D</fullName>
        <ecNumber evidence="1">7.1.1.-</ecNumber>
    </recommendedName>
    <alternativeName>
        <fullName evidence="1">NADH dehydrogenase I subunit C/D</fullName>
    </alternativeName>
    <alternativeName>
        <fullName evidence="1">NDH-1 subunit C/D</fullName>
    </alternativeName>
</protein>
<reference key="1">
    <citation type="journal article" date="2006" name="Proc. Natl. Acad. Sci. U.S.A.">
        <title>Identification of genes subject to positive selection in uropathogenic strains of Escherichia coli: a comparative genomics approach.</title>
        <authorList>
            <person name="Chen S.L."/>
            <person name="Hung C.-S."/>
            <person name="Xu J."/>
            <person name="Reigstad C.S."/>
            <person name="Magrini V."/>
            <person name="Sabo A."/>
            <person name="Blasiar D."/>
            <person name="Bieri T."/>
            <person name="Meyer R.R."/>
            <person name="Ozersky P."/>
            <person name="Armstrong J.R."/>
            <person name="Fulton R.S."/>
            <person name="Latreille J.P."/>
            <person name="Spieth J."/>
            <person name="Hooton T.M."/>
            <person name="Mardis E.R."/>
            <person name="Hultgren S.J."/>
            <person name="Gordon J.I."/>
        </authorList>
    </citation>
    <scope>NUCLEOTIDE SEQUENCE [LARGE SCALE GENOMIC DNA]</scope>
    <source>
        <strain>UTI89 / UPEC</strain>
    </source>
</reference>